<evidence type="ECO:0000250" key="1"/>
<evidence type="ECO:0000255" key="2">
    <source>
        <dbReference type="PROSITE-ProRule" id="PRU00517"/>
    </source>
</evidence>
<evidence type="ECO:0000255" key="3">
    <source>
        <dbReference type="PROSITE-ProRule" id="PRU01007"/>
    </source>
</evidence>
<evidence type="ECO:0000256" key="4">
    <source>
        <dbReference type="SAM" id="MobiDB-lite"/>
    </source>
</evidence>
<dbReference type="EC" id="4.2.1.51"/>
<dbReference type="EMBL" id="CP000511">
    <property type="protein sequence ID" value="ABM16427.1"/>
    <property type="molecule type" value="Genomic_DNA"/>
</dbReference>
<dbReference type="RefSeq" id="WP_011782779.1">
    <property type="nucleotide sequence ID" value="NC_008726.1"/>
</dbReference>
<dbReference type="SMR" id="A1TGX7"/>
<dbReference type="STRING" id="350058.Mvan_5662"/>
<dbReference type="KEGG" id="mva:Mvan_5662"/>
<dbReference type="eggNOG" id="COG0077">
    <property type="taxonomic scope" value="Bacteria"/>
</dbReference>
<dbReference type="HOGENOM" id="CLU_035008_0_0_11"/>
<dbReference type="UniPathway" id="UPA00121">
    <property type="reaction ID" value="UER00345"/>
</dbReference>
<dbReference type="Proteomes" id="UP000009159">
    <property type="component" value="Chromosome"/>
</dbReference>
<dbReference type="GO" id="GO:0005737">
    <property type="term" value="C:cytoplasm"/>
    <property type="evidence" value="ECO:0007669"/>
    <property type="project" value="TreeGrafter"/>
</dbReference>
<dbReference type="GO" id="GO:0004664">
    <property type="term" value="F:prephenate dehydratase activity"/>
    <property type="evidence" value="ECO:0007669"/>
    <property type="project" value="UniProtKB-EC"/>
</dbReference>
<dbReference type="GO" id="GO:0042803">
    <property type="term" value="F:protein homodimerization activity"/>
    <property type="evidence" value="ECO:0000250"/>
    <property type="project" value="UniProtKB"/>
</dbReference>
<dbReference type="GO" id="GO:0009094">
    <property type="term" value="P:L-phenylalanine biosynthetic process"/>
    <property type="evidence" value="ECO:0007669"/>
    <property type="project" value="UniProtKB-UniPathway"/>
</dbReference>
<dbReference type="CDD" id="cd04905">
    <property type="entry name" value="ACT_CM-PDT"/>
    <property type="match status" value="1"/>
</dbReference>
<dbReference type="CDD" id="cd13632">
    <property type="entry name" value="PBP2_Aa-PDT_like"/>
    <property type="match status" value="1"/>
</dbReference>
<dbReference type="FunFam" id="3.30.70.260:FF:000012">
    <property type="entry name" value="Prephenate dehydratase"/>
    <property type="match status" value="1"/>
</dbReference>
<dbReference type="FunFam" id="3.40.190.10:FF:000064">
    <property type="entry name" value="Prephenate dehydratase"/>
    <property type="match status" value="1"/>
</dbReference>
<dbReference type="FunFam" id="3.40.190.10:FF:000146">
    <property type="entry name" value="Prephenate dehydratase"/>
    <property type="match status" value="1"/>
</dbReference>
<dbReference type="Gene3D" id="3.30.70.260">
    <property type="match status" value="1"/>
</dbReference>
<dbReference type="Gene3D" id="3.40.190.10">
    <property type="entry name" value="Periplasmic binding protein-like II"/>
    <property type="match status" value="2"/>
</dbReference>
<dbReference type="InterPro" id="IPR045865">
    <property type="entry name" value="ACT-like_dom_sf"/>
</dbReference>
<dbReference type="InterPro" id="IPR002912">
    <property type="entry name" value="ACT_dom"/>
</dbReference>
<dbReference type="InterPro" id="IPR008242">
    <property type="entry name" value="Chor_mutase/pphenate_deHydtase"/>
</dbReference>
<dbReference type="InterPro" id="IPR001086">
    <property type="entry name" value="Preph_deHydtase"/>
</dbReference>
<dbReference type="InterPro" id="IPR018528">
    <property type="entry name" value="Preph_deHydtase_CS"/>
</dbReference>
<dbReference type="NCBIfam" id="NF008865">
    <property type="entry name" value="PRK11898.1"/>
    <property type="match status" value="1"/>
</dbReference>
<dbReference type="PANTHER" id="PTHR21022">
    <property type="entry name" value="PREPHENATE DEHYDRATASE P PROTEIN"/>
    <property type="match status" value="1"/>
</dbReference>
<dbReference type="PANTHER" id="PTHR21022:SF19">
    <property type="entry name" value="PREPHENATE DEHYDRATASE-RELATED"/>
    <property type="match status" value="1"/>
</dbReference>
<dbReference type="Pfam" id="PF01842">
    <property type="entry name" value="ACT"/>
    <property type="match status" value="1"/>
</dbReference>
<dbReference type="Pfam" id="PF00800">
    <property type="entry name" value="PDT"/>
    <property type="match status" value="1"/>
</dbReference>
<dbReference type="PIRSF" id="PIRSF001500">
    <property type="entry name" value="Chor_mut_pdt_Ppr"/>
    <property type="match status" value="1"/>
</dbReference>
<dbReference type="SUPFAM" id="SSF55021">
    <property type="entry name" value="ACT-like"/>
    <property type="match status" value="1"/>
</dbReference>
<dbReference type="SUPFAM" id="SSF53850">
    <property type="entry name" value="Periplasmic binding protein-like II"/>
    <property type="match status" value="1"/>
</dbReference>
<dbReference type="PROSITE" id="PS51671">
    <property type="entry name" value="ACT"/>
    <property type="match status" value="1"/>
</dbReference>
<dbReference type="PROSITE" id="PS00857">
    <property type="entry name" value="PREPHENATE_DEHYDR_1"/>
    <property type="match status" value="1"/>
</dbReference>
<dbReference type="PROSITE" id="PS00858">
    <property type="entry name" value="PREPHENATE_DEHYDR_2"/>
    <property type="match status" value="1"/>
</dbReference>
<dbReference type="PROSITE" id="PS51171">
    <property type="entry name" value="PREPHENATE_DEHYDR_3"/>
    <property type="match status" value="1"/>
</dbReference>
<proteinExistence type="inferred from homology"/>
<protein>
    <recommendedName>
        <fullName>Prephenate dehydratase</fullName>
        <shortName>PDT</shortName>
        <ecNumber>4.2.1.51</ecNumber>
    </recommendedName>
</protein>
<accession>A1TGX7</accession>
<feature type="chain" id="PRO_0000382045" description="Prephenate dehydratase">
    <location>
        <begin position="1"/>
        <end position="312"/>
    </location>
</feature>
<feature type="domain" description="Prephenate dehydratase" evidence="2">
    <location>
        <begin position="3"/>
        <end position="194"/>
    </location>
</feature>
<feature type="domain" description="ACT" evidence="3">
    <location>
        <begin position="208"/>
        <end position="285"/>
    </location>
</feature>
<feature type="region of interest" description="Disordered" evidence="4">
    <location>
        <begin position="291"/>
        <end position="312"/>
    </location>
</feature>
<feature type="site" description="Essential for activity" evidence="1">
    <location>
        <position position="187"/>
    </location>
</feature>
<name>PHEA_MYCVP</name>
<comment type="catalytic activity">
    <reaction>
        <text>prephenate + H(+) = 3-phenylpyruvate + CO2 + H2O</text>
        <dbReference type="Rhea" id="RHEA:21648"/>
        <dbReference type="ChEBI" id="CHEBI:15377"/>
        <dbReference type="ChEBI" id="CHEBI:15378"/>
        <dbReference type="ChEBI" id="CHEBI:16526"/>
        <dbReference type="ChEBI" id="CHEBI:18005"/>
        <dbReference type="ChEBI" id="CHEBI:29934"/>
        <dbReference type="EC" id="4.2.1.51"/>
    </reaction>
</comment>
<comment type="pathway">
    <text>Amino-acid biosynthesis; L-phenylalanine biosynthesis; phenylpyruvate from prephenate: step 1/1.</text>
</comment>
<comment type="subunit">
    <text evidence="1">Homodimer.</text>
</comment>
<sequence length="312" mass="32278">MPGIAYLGPEGTFTEAALRALQAHGLIPSTAPDAAGADEVTPIAADSTSAALAAVRSGDADFACVPIENSIDGSVIPTLDSLADGAALQIYAELTLDVSFTIAVRPGTAAADVRTVAAYPVAAAQVRRWLAAHLPEAEVVPANSNAAAAQDVAAGRADAGVSTALATQRYGLEALAADVVDEPNARTRFVLVGRPGPPPKCTGADRTSVVLQLDNVPGALVSAMTELAVRDIDLTRIESRPTRTGLGTYKFFLDFVGHIEDPPVAEALRALHRRCADVRYLGSWPTGDVVGAAPPPMDESASWLEGLREGRP</sequence>
<keyword id="KW-0028">Amino-acid biosynthesis</keyword>
<keyword id="KW-0057">Aromatic amino acid biosynthesis</keyword>
<keyword id="KW-0456">Lyase</keyword>
<keyword id="KW-0584">Phenylalanine biosynthesis</keyword>
<reference key="1">
    <citation type="submission" date="2006-12" db="EMBL/GenBank/DDBJ databases">
        <title>Complete sequence of Mycobacterium vanbaalenii PYR-1.</title>
        <authorList>
            <consortium name="US DOE Joint Genome Institute"/>
            <person name="Copeland A."/>
            <person name="Lucas S."/>
            <person name="Lapidus A."/>
            <person name="Barry K."/>
            <person name="Detter J.C."/>
            <person name="Glavina del Rio T."/>
            <person name="Hammon N."/>
            <person name="Israni S."/>
            <person name="Dalin E."/>
            <person name="Tice H."/>
            <person name="Pitluck S."/>
            <person name="Singan V."/>
            <person name="Schmutz J."/>
            <person name="Larimer F."/>
            <person name="Land M."/>
            <person name="Hauser L."/>
            <person name="Kyrpides N."/>
            <person name="Anderson I.J."/>
            <person name="Miller C."/>
            <person name="Richardson P."/>
        </authorList>
    </citation>
    <scope>NUCLEOTIDE SEQUENCE [LARGE SCALE GENOMIC DNA]</scope>
    <source>
        <strain>DSM 7251 / JCM 13017 / BCRC 16820 / KCTC 9966 / NRRL B-24157 / PYR-1</strain>
    </source>
</reference>
<organism>
    <name type="scientific">Mycolicibacterium vanbaalenii (strain DSM 7251 / JCM 13017 / BCRC 16820 / KCTC 9966 / NRRL B-24157 / PYR-1)</name>
    <name type="common">Mycobacterium vanbaalenii</name>
    <dbReference type="NCBI Taxonomy" id="350058"/>
    <lineage>
        <taxon>Bacteria</taxon>
        <taxon>Bacillati</taxon>
        <taxon>Actinomycetota</taxon>
        <taxon>Actinomycetes</taxon>
        <taxon>Mycobacteriales</taxon>
        <taxon>Mycobacteriaceae</taxon>
        <taxon>Mycolicibacterium</taxon>
    </lineage>
</organism>
<gene>
    <name type="primary">pheA</name>
    <name type="ordered locus">Mvan_5662</name>
</gene>